<proteinExistence type="inferred from homology"/>
<reference evidence="13" key="1">
    <citation type="journal article" date="2014" name="PLoS Genet.">
        <title>Analysis of the genome and transcriptome of Cryptococcus neoformans var. grubii reveals complex RNA expression and microevolution leading to virulence attenuation.</title>
        <authorList>
            <person name="Janbon G."/>
            <person name="Ormerod K.L."/>
            <person name="Paulet D."/>
            <person name="Byrnes E.J. III"/>
            <person name="Yadav V."/>
            <person name="Chatterjee G."/>
            <person name="Mullapudi N."/>
            <person name="Hon C.-C."/>
            <person name="Billmyre R.B."/>
            <person name="Brunel F."/>
            <person name="Bahn Y.-S."/>
            <person name="Chen W."/>
            <person name="Chen Y."/>
            <person name="Chow E.W.L."/>
            <person name="Coppee J.-Y."/>
            <person name="Floyd-Averette A."/>
            <person name="Gaillardin C."/>
            <person name="Gerik K.J."/>
            <person name="Goldberg J."/>
            <person name="Gonzalez-Hilarion S."/>
            <person name="Gujja S."/>
            <person name="Hamlin J.L."/>
            <person name="Hsueh Y.-P."/>
            <person name="Ianiri G."/>
            <person name="Jones S."/>
            <person name="Kodira C.D."/>
            <person name="Kozubowski L."/>
            <person name="Lam W."/>
            <person name="Marra M."/>
            <person name="Mesner L.D."/>
            <person name="Mieczkowski P.A."/>
            <person name="Moyrand F."/>
            <person name="Nielsen K."/>
            <person name="Proux C."/>
            <person name="Rossignol T."/>
            <person name="Schein J.E."/>
            <person name="Sun S."/>
            <person name="Wollschlaeger C."/>
            <person name="Wood I.A."/>
            <person name="Zeng Q."/>
            <person name="Neuveglise C."/>
            <person name="Newlon C.S."/>
            <person name="Perfect J.R."/>
            <person name="Lodge J.K."/>
            <person name="Idnurm A."/>
            <person name="Stajich J.E."/>
            <person name="Kronstad J.W."/>
            <person name="Sanyal K."/>
            <person name="Heitman J."/>
            <person name="Fraser J.A."/>
            <person name="Cuomo C.A."/>
            <person name="Dietrich F.S."/>
        </authorList>
    </citation>
    <scope>NUCLEOTIDE SEQUENCE [LARGE SCALE GENOMIC DNA]</scope>
    <source>
        <strain>H99 / ATCC 208821 / CBS 10515 / FGSC 9487</strain>
    </source>
</reference>
<reference evidence="10" key="2">
    <citation type="journal article" date="2005" name="Eukaryot. Cell">
        <title>A chitin synthase and its regulator protein are critical for chitosan production and growth of the fungal pathogen Cryptococcus neoformans.</title>
        <authorList>
            <person name="Banks I.R."/>
            <person name="Specht C.A."/>
            <person name="Donlin M.J."/>
            <person name="Gerik K.J."/>
            <person name="Levitz S.M."/>
            <person name="Lodge J.K."/>
        </authorList>
    </citation>
    <scope>FUNCTION</scope>
    <scope>SUBCELLULAR LOCATION</scope>
    <scope>DISRUPTION PHENOTYPE</scope>
</reference>
<reference evidence="10" key="3">
    <citation type="journal article" date="2007" name="Eukaryot. Cell">
        <title>Chitosan, the deacetylated form of chitin, is necessary for cell wall integrity in Cryptococcus neoformans.</title>
        <authorList>
            <person name="Baker L.G."/>
            <person name="Specht C.A."/>
            <person name="Donlin M.J."/>
            <person name="Lodge J.K."/>
        </authorList>
    </citation>
    <scope>FUNCTION</scope>
    <scope>DISRUPTION PHENOTYPE</scope>
    <source>
        <strain>KN99</strain>
    </source>
</reference>
<reference evidence="10" key="4">
    <citation type="journal article" date="2019" name="Genetics">
        <title>Roles for Stress Response and Cell Wall Biosynthesis Pathways in Caspofungin Tolerance in Cryptococcus neoformans.</title>
        <authorList>
            <person name="Pianalto K.M."/>
            <person name="Billmyre R.B."/>
            <person name="Telzrow C.L."/>
            <person name="Alspaugh J.A."/>
        </authorList>
    </citation>
    <scope>DISRUPTION PHENOTYPE</scope>
</reference>
<reference evidence="10" key="5">
    <citation type="journal article" date="2020" name="MBio">
        <title>Cryptococcus neoformans Chitin Synthase 3 Plays a Critical Role in Dampening Host Inflammatory Responses.</title>
        <authorList>
            <person name="Hole C.R."/>
            <person name="Lam W.C."/>
            <person name="Upadhya R."/>
            <person name="Lodge J.K."/>
        </authorList>
    </citation>
    <scope>FUNCTION</scope>
    <source>
        <strain>KN99</strain>
    </source>
</reference>
<gene>
    <name evidence="9" type="primary">CSR2</name>
    <name evidence="12" type="ORF">CNAG_07636</name>
</gene>
<name>SKT5_CRYNH</name>
<sequence>MATTNAQIYQQSQMPIPMPTPSLNPNINSAPTPGPNAMSVYEDCQSPLDTSVSGMYPGDRGSRVVSQPAPLLDQSHLRPGNQANLLSHDRTIELYRENAKKTNDPELIFEFSAFMIDAAKAMIPPEQEKDTNPSPALIKQMEKREEIIKEATSLLKRLADRGFPDAQYFLADCYANGIGTARGKQDFDRAFPLFILAAKHGHPDACYRAGTCCEHGWGCRRDSAKAVSFYKKAAVGLHPGAMYRLGTAELNGALGFPRRPKEGVKWLKRSAEHATEEFPHALHELALLHERGIENVVFVDNDYAAELLAQSAELGYAPSAFKLGECYEYGKMGCPVDPALSIHYYNISAQQDHKDACFALTAWYLVGSPGVLPQSDTEAYLWAKKAAELGLAKAQYAVGYFTETGIGIEANPQAALTWYKQAAEGGDKRAAKRLATGSRSSALDRRLEMEALKEEKRLGAANLAQRSGSGSGASGKDGKDGCLIM</sequence>
<comment type="function">
    <text evidence="5 6 8">Activator of the chitin synthase CHS3 which polymerizes chitin, a structural polymer of the fungal cell wall (PubMed:16278457, PubMed:17400891). Chitin produced by CHS3 is deacetylated to chitosan, which helps to maintain cell wall integrity, anchor melanin, and offers an advantage during infection, as chitosan is less readily detected by host immunosurveillance (PubMed:16278457, PubMed:17400891, PubMed:32071275).</text>
</comment>
<comment type="subcellular location">
    <subcellularLocation>
        <location evidence="11">Cell membrane</location>
        <topology evidence="2">Lipid-anchor</topology>
        <orientation evidence="2">Cytoplasmic side</orientation>
    </subcellularLocation>
    <text evidence="2">Farnesylation is not required for cellular membrane localization.</text>
</comment>
<comment type="disruption phenotype">
    <text evidence="5 6 7">Increases cellular chitin level and decreases cellular chitosan level (PubMed:16278457, PubMed:17400891). Swollen cell with abnormal cytokinesis (PubMed:16278457, PubMed:17400891). Melanization of surrounding media (PubMed:16278457, PubMed:17400891). Irregular capsular width (PubMed:17400891). Sensitive to: high temperature, Congo Red (cell wall stressor), caspofungin (cell wall stressor), sodium dodecyl sulfate (cell wall stressor), Calcofluor White (cell wall stressor), caffeine, NaCl (osmotic stressor) (PubMed:16278457, PubMed:17400891, PubMed:31266771).</text>
</comment>
<comment type="similarity">
    <text evidence="10">Belongs to the SKT5 family.</text>
</comment>
<dbReference type="EMBL" id="CP003825">
    <property type="protein sequence ID" value="AFR95549.1"/>
    <property type="molecule type" value="Genomic_DNA"/>
</dbReference>
<dbReference type="RefSeq" id="XP_012050245.1">
    <property type="nucleotide sequence ID" value="XM_012194855.1"/>
</dbReference>
<dbReference type="SMR" id="J9VSG5"/>
<dbReference type="GeneID" id="23890461"/>
<dbReference type="KEGG" id="cng:CNAG_07636"/>
<dbReference type="VEuPathDB" id="FungiDB:CNAG_07636"/>
<dbReference type="HOGENOM" id="CLU_000288_126_3_1"/>
<dbReference type="OrthoDB" id="2067at5206"/>
<dbReference type="Proteomes" id="UP000010091">
    <property type="component" value="Chromosome 6"/>
</dbReference>
<dbReference type="GO" id="GO:0005886">
    <property type="term" value="C:plasma membrane"/>
    <property type="evidence" value="ECO:0000305"/>
    <property type="project" value="UniProtKB"/>
</dbReference>
<dbReference type="GO" id="GO:0008047">
    <property type="term" value="F:enzyme activator activity"/>
    <property type="evidence" value="ECO:0000315"/>
    <property type="project" value="UniProtKB"/>
</dbReference>
<dbReference type="GO" id="GO:0006031">
    <property type="term" value="P:chitin biosynthetic process"/>
    <property type="evidence" value="ECO:0000315"/>
    <property type="project" value="UniProtKB"/>
</dbReference>
<dbReference type="Gene3D" id="1.25.40.10">
    <property type="entry name" value="Tetratricopeptide repeat domain"/>
    <property type="match status" value="2"/>
</dbReference>
<dbReference type="InterPro" id="IPR051726">
    <property type="entry name" value="Chitin_Synth_Reg"/>
</dbReference>
<dbReference type="InterPro" id="IPR006597">
    <property type="entry name" value="Sel1-like"/>
</dbReference>
<dbReference type="InterPro" id="IPR011990">
    <property type="entry name" value="TPR-like_helical_dom_sf"/>
</dbReference>
<dbReference type="PANTHER" id="PTHR46430:SF1">
    <property type="entry name" value="CHITIN SYNTHASE REGULATOR SKT5-RELATED"/>
    <property type="match status" value="1"/>
</dbReference>
<dbReference type="PANTHER" id="PTHR46430">
    <property type="entry name" value="PROTEIN SKT5-RELATED"/>
    <property type="match status" value="1"/>
</dbReference>
<dbReference type="Pfam" id="PF08238">
    <property type="entry name" value="Sel1"/>
    <property type="match status" value="7"/>
</dbReference>
<dbReference type="SMART" id="SM00671">
    <property type="entry name" value="SEL1"/>
    <property type="match status" value="7"/>
</dbReference>
<dbReference type="SUPFAM" id="SSF81901">
    <property type="entry name" value="HCP-like"/>
    <property type="match status" value="1"/>
</dbReference>
<feature type="chain" id="PRO_0000451818" description="Chitin synthase regulator 2">
    <location>
        <begin position="1"/>
        <end position="485"/>
    </location>
</feature>
<feature type="propeptide" id="PRO_0000451819" description="Removed in mature form" evidence="1">
    <location>
        <begin position="483"/>
        <end position="485"/>
    </location>
</feature>
<feature type="repeat" description="Sel1-like 1" evidence="3">
    <location>
        <begin position="164"/>
        <end position="202"/>
    </location>
</feature>
<feature type="repeat" description="Sel1-like 2" evidence="3">
    <location>
        <begin position="203"/>
        <end position="238"/>
    </location>
</feature>
<feature type="repeat" description="Sel1-like 3" evidence="3">
    <location>
        <begin position="239"/>
        <end position="275"/>
    </location>
</feature>
<feature type="repeat" description="Sel1-like 4" evidence="3">
    <location>
        <begin position="279"/>
        <end position="316"/>
    </location>
</feature>
<feature type="repeat" description="Sel1-like 5" evidence="3">
    <location>
        <begin position="317"/>
        <end position="353"/>
    </location>
</feature>
<feature type="repeat" description="Sel1-like 6" evidence="3">
    <location>
        <begin position="354"/>
        <end position="391"/>
    </location>
</feature>
<feature type="repeat" description="Sel1-like 7" evidence="3">
    <location>
        <begin position="392"/>
        <end position="427"/>
    </location>
</feature>
<feature type="region of interest" description="Disordered" evidence="4">
    <location>
        <begin position="460"/>
        <end position="485"/>
    </location>
</feature>
<feature type="compositionally biased region" description="Basic and acidic residues" evidence="4">
    <location>
        <begin position="476"/>
        <end position="485"/>
    </location>
</feature>
<feature type="modified residue" description="Cysteine methyl ester" evidence="1">
    <location>
        <position position="482"/>
    </location>
</feature>
<feature type="lipid moiety-binding region" description="S-farnesyl cysteine" evidence="1">
    <location>
        <position position="482"/>
    </location>
</feature>
<protein>
    <recommendedName>
        <fullName evidence="9">Chitin synthase regulator 2</fullName>
    </recommendedName>
</protein>
<evidence type="ECO:0000250" key="1">
    <source>
        <dbReference type="UniProtKB" id="P34165"/>
    </source>
</evidence>
<evidence type="ECO:0000250" key="2">
    <source>
        <dbReference type="UniProtKB" id="P34226"/>
    </source>
</evidence>
<evidence type="ECO:0000255" key="3"/>
<evidence type="ECO:0000256" key="4">
    <source>
        <dbReference type="SAM" id="MobiDB-lite"/>
    </source>
</evidence>
<evidence type="ECO:0000269" key="5">
    <source>
    </source>
</evidence>
<evidence type="ECO:0000269" key="6">
    <source>
    </source>
</evidence>
<evidence type="ECO:0000269" key="7">
    <source>
    </source>
</evidence>
<evidence type="ECO:0000269" key="8">
    <source>
    </source>
</evidence>
<evidence type="ECO:0000303" key="9">
    <source>
    </source>
</evidence>
<evidence type="ECO:0000305" key="10"/>
<evidence type="ECO:0000305" key="11">
    <source>
    </source>
</evidence>
<evidence type="ECO:0000312" key="12">
    <source>
        <dbReference type="EMBL" id="AFR95549.1"/>
    </source>
</evidence>
<evidence type="ECO:0000312" key="13">
    <source>
        <dbReference type="Proteomes" id="UP000010091"/>
    </source>
</evidence>
<accession>J9VSG5</accession>
<keyword id="KW-1003">Cell membrane</keyword>
<keyword id="KW-0449">Lipoprotein</keyword>
<keyword id="KW-0472">Membrane</keyword>
<keyword id="KW-0488">Methylation</keyword>
<keyword id="KW-0636">Prenylation</keyword>
<keyword id="KW-0677">Repeat</keyword>
<organism evidence="13">
    <name type="scientific">Cryptococcus neoformans var. grubii serotype A (strain H99 / ATCC 208821 / CBS 10515 / FGSC 9487)</name>
    <name type="common">Filobasidiella neoformans var. grubii</name>
    <dbReference type="NCBI Taxonomy" id="235443"/>
    <lineage>
        <taxon>Eukaryota</taxon>
        <taxon>Fungi</taxon>
        <taxon>Dikarya</taxon>
        <taxon>Basidiomycota</taxon>
        <taxon>Agaricomycotina</taxon>
        <taxon>Tremellomycetes</taxon>
        <taxon>Tremellales</taxon>
        <taxon>Cryptococcaceae</taxon>
        <taxon>Cryptococcus</taxon>
        <taxon>Cryptococcus neoformans species complex</taxon>
    </lineage>
</organism>